<feature type="signal peptide" evidence="4">
    <location>
        <begin position="1"/>
        <end position="18"/>
    </location>
</feature>
<feature type="chain" id="PRO_0000028465" description="Haptoglobin">
    <location>
        <begin position="19"/>
        <end position="347"/>
    </location>
</feature>
<feature type="chain" id="PRO_0000028466" description="Haptoglobin alpha chain">
    <location>
        <begin position="19"/>
        <end position="101"/>
    </location>
</feature>
<feature type="chain" id="PRO_0000028467" description="Haptoglobin beta chain">
    <location>
        <begin position="103"/>
        <end position="347"/>
    </location>
</feature>
<feature type="domain" description="Sushi" evidence="6">
    <location>
        <begin position="31"/>
        <end position="88"/>
    </location>
</feature>
<feature type="domain" description="Peptidase S1" evidence="5">
    <location>
        <begin position="103"/>
        <end position="345"/>
    </location>
</feature>
<feature type="region of interest" description="Interaction with CD163" evidence="1">
    <location>
        <begin position="259"/>
        <end position="264"/>
    </location>
</feature>
<feature type="glycosylation site" description="N-linked (GlcNAc...) asparagine" evidence="4">
    <location>
        <position position="148"/>
    </location>
</feature>
<feature type="glycosylation site" description="N-linked (GlcNAc...) asparagine" evidence="4">
    <location>
        <position position="182"/>
    </location>
</feature>
<feature type="glycosylation site" description="N-linked (GlcNAc...) asparagine" evidence="4">
    <location>
        <position position="264"/>
    </location>
</feature>
<feature type="disulfide bond" description="Interchain" evidence="1">
    <location>
        <position position="33"/>
    </location>
</feature>
<feature type="disulfide bond" evidence="1">
    <location>
        <begin position="52"/>
        <end position="86"/>
    </location>
</feature>
<feature type="disulfide bond" description="Interchain (between alpha and beta chains)" evidence="5 6">
    <location>
        <begin position="90"/>
        <end position="207"/>
    </location>
</feature>
<feature type="disulfide bond" evidence="1">
    <location>
        <begin position="250"/>
        <end position="281"/>
    </location>
</feature>
<feature type="disulfide bond" evidence="1">
    <location>
        <begin position="292"/>
        <end position="322"/>
    </location>
</feature>
<reference key="1">
    <citation type="submission" date="1994-05" db="EMBL/GenBank/DDBJ databases">
        <title>Evolution of mouse haptoglobin genes.</title>
        <authorList>
            <person name="Pajovic S."/>
            <person name="Jones V.E."/>
            <person name="Prowse K.R."/>
            <person name="Berger F.G."/>
            <person name="Baumann H."/>
        </authorList>
    </citation>
    <scope>NUCLEOTIDE SEQUENCE [MRNA]</scope>
    <source>
        <tissue>Liver</tissue>
    </source>
</reference>
<organism>
    <name type="scientific">Mus caroli</name>
    <name type="common">Ryukyu mouse</name>
    <name type="synonym">Ricefield mouse</name>
    <dbReference type="NCBI Taxonomy" id="10089"/>
    <lineage>
        <taxon>Eukaryota</taxon>
        <taxon>Metazoa</taxon>
        <taxon>Chordata</taxon>
        <taxon>Craniata</taxon>
        <taxon>Vertebrata</taxon>
        <taxon>Euteleostomi</taxon>
        <taxon>Mammalia</taxon>
        <taxon>Eutheria</taxon>
        <taxon>Euarchontoglires</taxon>
        <taxon>Glires</taxon>
        <taxon>Rodentia</taxon>
        <taxon>Myomorpha</taxon>
        <taxon>Muroidea</taxon>
        <taxon>Muridae</taxon>
        <taxon>Murinae</taxon>
        <taxon>Mus</taxon>
        <taxon>Mus</taxon>
    </lineage>
</organism>
<name>HPT_MUSCR</name>
<proteinExistence type="evidence at transcript level"/>
<gene>
    <name type="primary">Hp</name>
</gene>
<comment type="function">
    <text evidence="1">As a result of hemolysis, hemoglobin is found to accumulate in the kidney and is secreted in the urine. Haptoglobin captures, and combines with free plasma hemoglobin to allow hepatic recycling of heme iron and to prevent kidney damage. Haptoglobin also acts as an antioxidant, has antibacterial activity and plays a role in modulating many aspects of the acute phase response. Hemoglobin/haptoglobin complexes are rapidly cleared by the macrophage CD163 scavenger receptor expressed on the surface of liver Kupfer cells through an endocytic lysosomal degradation pathway (By similarity).</text>
</comment>
<comment type="subunit">
    <text evidence="2 3">Tetramer of two alpha and two beta chains; disulfide-linked (By similarity). The hemoglobin/haptoglobin complex is composed of a haptoglobin dimer bound to two hemoglobin alpha-beta dimers (By similarity). Interacts with CD163 (By similarity). Interacts with ERGIC3 (By similarity).</text>
</comment>
<comment type="subcellular location">
    <subcellularLocation>
        <location evidence="1">Secreted</location>
    </subcellularLocation>
</comment>
<comment type="tissue specificity">
    <text>Expressed by the liver and secreted in plasma.</text>
</comment>
<comment type="domain">
    <text evidence="1">The beta chain mediates most of the interactions with both subunits of hemoglobin, while the alpha chain forms the homodimeric interface.</text>
</comment>
<comment type="similarity">
    <text evidence="5">Belongs to the peptidase S1 family.</text>
</comment>
<comment type="caution">
    <text evidence="7">Although homologous to serine proteases, it has lost all essential catalytic residues and has no enzymatic activity.</text>
</comment>
<keyword id="KW-0011">Acute phase</keyword>
<keyword id="KW-0044">Antibiotic</keyword>
<keyword id="KW-0929">Antimicrobial</keyword>
<keyword id="KW-0049">Antioxidant</keyword>
<keyword id="KW-1015">Disulfide bond</keyword>
<keyword id="KW-0325">Glycoprotein</keyword>
<keyword id="KW-0351">Hemoglobin-binding</keyword>
<keyword id="KW-0391">Immunity</keyword>
<keyword id="KW-0964">Secreted</keyword>
<keyword id="KW-0721">Serine protease homolog</keyword>
<keyword id="KW-0732">Signal</keyword>
<keyword id="KW-0768">Sushi</keyword>
<protein>
    <recommendedName>
        <fullName>Haptoglobin</fullName>
    </recommendedName>
    <component>
        <recommendedName>
            <fullName>Haptoglobin alpha chain</fullName>
        </recommendedName>
    </component>
    <component>
        <recommendedName>
            <fullName>Haptoglobin beta chain</fullName>
        </recommendedName>
    </component>
</protein>
<sequence length="347" mass="38847">MRALGAVVTLLLWGQLFAVELGNDAMDFEDDSCPKPPEIANGYVEHLVRYRCRQFYRLRAEGDGVYTLNDEKQWMNTVAGEKLPECEAVCGKPKHPVDQVQRIIGGSMDAKGSFPWQAKMISRHGLTTGATLISDQWLLTTAKNLFLNHSETASGKDIAPTLTLYVGKNQLVEIEKVILHPNHSVVDIGLIKLKQRVLVTERVMPICLPSKDYVAPGRVGYVSGWGRNQDFRFTDRLKYVMLPVADQDKCVVHYEKSTVPEKKNFTSPVGVQPILNEHTFCAGLTKYEEDTCYGDAGSAFAIHDMEEDTWYAAGILSFDKSCAVAEYGVYVRATDLKDWVQETMAKN</sequence>
<accession>Q60574</accession>
<dbReference type="EMBL" id="L10352">
    <property type="protein sequence ID" value="AAA37778.1"/>
    <property type="molecule type" value="mRNA"/>
</dbReference>
<dbReference type="SMR" id="Q60574"/>
<dbReference type="MEROPS" id="S01.972"/>
<dbReference type="GlyCosmos" id="Q60574">
    <property type="glycosylation" value="3 sites, No reported glycans"/>
</dbReference>
<dbReference type="Proteomes" id="UP000515126">
    <property type="component" value="Unplaced"/>
</dbReference>
<dbReference type="GO" id="GO:0072562">
    <property type="term" value="C:blood microparticle"/>
    <property type="evidence" value="ECO:0007669"/>
    <property type="project" value="TreeGrafter"/>
</dbReference>
<dbReference type="GO" id="GO:0016209">
    <property type="term" value="F:antioxidant activity"/>
    <property type="evidence" value="ECO:0007669"/>
    <property type="project" value="UniProtKB-KW"/>
</dbReference>
<dbReference type="GO" id="GO:0030492">
    <property type="term" value="F:hemoglobin binding"/>
    <property type="evidence" value="ECO:0007669"/>
    <property type="project" value="UniProtKB-KW"/>
</dbReference>
<dbReference type="GO" id="GO:0006953">
    <property type="term" value="P:acute-phase response"/>
    <property type="evidence" value="ECO:0007669"/>
    <property type="project" value="UniProtKB-KW"/>
</dbReference>
<dbReference type="GO" id="GO:0042742">
    <property type="term" value="P:defense response to bacterium"/>
    <property type="evidence" value="ECO:0007669"/>
    <property type="project" value="UniProtKB-KW"/>
</dbReference>
<dbReference type="GO" id="GO:0002376">
    <property type="term" value="P:immune system process"/>
    <property type="evidence" value="ECO:0007669"/>
    <property type="project" value="UniProtKB-KW"/>
</dbReference>
<dbReference type="CDD" id="cd00033">
    <property type="entry name" value="CCP"/>
    <property type="match status" value="1"/>
</dbReference>
<dbReference type="CDD" id="cd00190">
    <property type="entry name" value="Tryp_SPc"/>
    <property type="match status" value="1"/>
</dbReference>
<dbReference type="FunFam" id="2.10.70.10:FF:000048">
    <property type="entry name" value="Haptoglobin"/>
    <property type="match status" value="1"/>
</dbReference>
<dbReference type="FunFam" id="2.40.10.10:FF:000027">
    <property type="entry name" value="Haptoglobin"/>
    <property type="match status" value="1"/>
</dbReference>
<dbReference type="FunFam" id="2.40.10.10:FF:000031">
    <property type="entry name" value="Haptoglobin"/>
    <property type="match status" value="1"/>
</dbReference>
<dbReference type="Gene3D" id="2.10.70.10">
    <property type="entry name" value="Complement Module, domain 1"/>
    <property type="match status" value="1"/>
</dbReference>
<dbReference type="Gene3D" id="2.40.10.10">
    <property type="entry name" value="Trypsin-like serine proteases"/>
    <property type="match status" value="2"/>
</dbReference>
<dbReference type="InterPro" id="IPR008292">
    <property type="entry name" value="Haptoglobin"/>
</dbReference>
<dbReference type="InterPro" id="IPR009003">
    <property type="entry name" value="Peptidase_S1_PA"/>
</dbReference>
<dbReference type="InterPro" id="IPR043504">
    <property type="entry name" value="Peptidase_S1_PA_chymotrypsin"/>
</dbReference>
<dbReference type="InterPro" id="IPR001314">
    <property type="entry name" value="Peptidase_S1A"/>
</dbReference>
<dbReference type="InterPro" id="IPR035976">
    <property type="entry name" value="Sushi/SCR/CCP_sf"/>
</dbReference>
<dbReference type="InterPro" id="IPR000436">
    <property type="entry name" value="Sushi_SCR_CCP_dom"/>
</dbReference>
<dbReference type="InterPro" id="IPR001254">
    <property type="entry name" value="Trypsin_dom"/>
</dbReference>
<dbReference type="PANTHER" id="PTHR24255">
    <property type="entry name" value="COMPLEMENT COMPONENT 1, S SUBCOMPONENT-RELATED"/>
    <property type="match status" value="1"/>
</dbReference>
<dbReference type="PANTHER" id="PTHR24255:SF27">
    <property type="entry name" value="HAPTOGLOBIN-RELATED PROTEIN"/>
    <property type="match status" value="1"/>
</dbReference>
<dbReference type="Pfam" id="PF00089">
    <property type="entry name" value="Trypsin"/>
    <property type="match status" value="1"/>
</dbReference>
<dbReference type="PIRSF" id="PIRSF001137">
    <property type="entry name" value="Haptoglobin"/>
    <property type="match status" value="1"/>
</dbReference>
<dbReference type="PRINTS" id="PR00722">
    <property type="entry name" value="CHYMOTRYPSIN"/>
</dbReference>
<dbReference type="SMART" id="SM00020">
    <property type="entry name" value="Tryp_SPc"/>
    <property type="match status" value="1"/>
</dbReference>
<dbReference type="SUPFAM" id="SSF57535">
    <property type="entry name" value="Complement control module/SCR domain"/>
    <property type="match status" value="1"/>
</dbReference>
<dbReference type="SUPFAM" id="SSF50494">
    <property type="entry name" value="Trypsin-like serine proteases"/>
    <property type="match status" value="1"/>
</dbReference>
<dbReference type="PROSITE" id="PS50923">
    <property type="entry name" value="SUSHI"/>
    <property type="match status" value="1"/>
</dbReference>
<dbReference type="PROSITE" id="PS50240">
    <property type="entry name" value="TRYPSIN_DOM"/>
    <property type="match status" value="1"/>
</dbReference>
<evidence type="ECO:0000250" key="1"/>
<evidence type="ECO:0000250" key="2">
    <source>
        <dbReference type="UniProtKB" id="P00738"/>
    </source>
</evidence>
<evidence type="ECO:0000250" key="3">
    <source>
        <dbReference type="UniProtKB" id="Q8SPS7"/>
    </source>
</evidence>
<evidence type="ECO:0000255" key="4"/>
<evidence type="ECO:0000255" key="5">
    <source>
        <dbReference type="PROSITE-ProRule" id="PRU00274"/>
    </source>
</evidence>
<evidence type="ECO:0000255" key="6">
    <source>
        <dbReference type="PROSITE-ProRule" id="PRU00302"/>
    </source>
</evidence>
<evidence type="ECO:0000305" key="7"/>